<accession>A9W377</accession>
<name>TRUA_METEP</name>
<comment type="function">
    <text evidence="1">Formation of pseudouridine at positions 38, 39 and 40 in the anticodon stem and loop of transfer RNAs.</text>
</comment>
<comment type="catalytic activity">
    <reaction evidence="1">
        <text>uridine(38/39/40) in tRNA = pseudouridine(38/39/40) in tRNA</text>
        <dbReference type="Rhea" id="RHEA:22376"/>
        <dbReference type="Rhea" id="RHEA-COMP:10085"/>
        <dbReference type="Rhea" id="RHEA-COMP:10087"/>
        <dbReference type="ChEBI" id="CHEBI:65314"/>
        <dbReference type="ChEBI" id="CHEBI:65315"/>
        <dbReference type="EC" id="5.4.99.12"/>
    </reaction>
</comment>
<comment type="subunit">
    <text evidence="1">Homodimer.</text>
</comment>
<comment type="similarity">
    <text evidence="1">Belongs to the tRNA pseudouridine synthase TruA family.</text>
</comment>
<organism>
    <name type="scientific">Methylorubrum extorquens (strain PA1)</name>
    <name type="common">Methylobacterium extorquens</name>
    <dbReference type="NCBI Taxonomy" id="419610"/>
    <lineage>
        <taxon>Bacteria</taxon>
        <taxon>Pseudomonadati</taxon>
        <taxon>Pseudomonadota</taxon>
        <taxon>Alphaproteobacteria</taxon>
        <taxon>Hyphomicrobiales</taxon>
        <taxon>Methylobacteriaceae</taxon>
        <taxon>Methylorubrum</taxon>
    </lineage>
</organism>
<proteinExistence type="inferred from homology"/>
<gene>
    <name evidence="1" type="primary">truA</name>
    <name type="ordered locus">Mext_1634</name>
</gene>
<dbReference type="EC" id="5.4.99.12" evidence="1"/>
<dbReference type="EMBL" id="CP000908">
    <property type="protein sequence ID" value="ABY30033.1"/>
    <property type="molecule type" value="Genomic_DNA"/>
</dbReference>
<dbReference type="RefSeq" id="WP_012253222.1">
    <property type="nucleotide sequence ID" value="NC_010172.1"/>
</dbReference>
<dbReference type="SMR" id="A9W377"/>
<dbReference type="KEGG" id="mex:Mext_1634"/>
<dbReference type="eggNOG" id="COG0101">
    <property type="taxonomic scope" value="Bacteria"/>
</dbReference>
<dbReference type="HOGENOM" id="CLU_014673_0_2_5"/>
<dbReference type="BioCyc" id="MEXT419610:MEXT_RS08295-MONOMER"/>
<dbReference type="GO" id="GO:0003723">
    <property type="term" value="F:RNA binding"/>
    <property type="evidence" value="ECO:0007669"/>
    <property type="project" value="InterPro"/>
</dbReference>
<dbReference type="GO" id="GO:0160147">
    <property type="term" value="F:tRNA pseudouridine(38-40) synthase activity"/>
    <property type="evidence" value="ECO:0007669"/>
    <property type="project" value="UniProtKB-EC"/>
</dbReference>
<dbReference type="GO" id="GO:0031119">
    <property type="term" value="P:tRNA pseudouridine synthesis"/>
    <property type="evidence" value="ECO:0007669"/>
    <property type="project" value="UniProtKB-UniRule"/>
</dbReference>
<dbReference type="CDD" id="cd02570">
    <property type="entry name" value="PseudoU_synth_EcTruA"/>
    <property type="match status" value="1"/>
</dbReference>
<dbReference type="FunFam" id="3.30.70.580:FF:000001">
    <property type="entry name" value="tRNA pseudouridine synthase A"/>
    <property type="match status" value="1"/>
</dbReference>
<dbReference type="Gene3D" id="3.30.70.660">
    <property type="entry name" value="Pseudouridine synthase I, catalytic domain, C-terminal subdomain"/>
    <property type="match status" value="1"/>
</dbReference>
<dbReference type="Gene3D" id="3.30.70.580">
    <property type="entry name" value="Pseudouridine synthase I, catalytic domain, N-terminal subdomain"/>
    <property type="match status" value="1"/>
</dbReference>
<dbReference type="HAMAP" id="MF_00171">
    <property type="entry name" value="TruA"/>
    <property type="match status" value="1"/>
</dbReference>
<dbReference type="InterPro" id="IPR020103">
    <property type="entry name" value="PsdUridine_synth_cat_dom_sf"/>
</dbReference>
<dbReference type="InterPro" id="IPR001406">
    <property type="entry name" value="PsdUridine_synth_TruA"/>
</dbReference>
<dbReference type="InterPro" id="IPR020097">
    <property type="entry name" value="PsdUridine_synth_TruA_a/b_dom"/>
</dbReference>
<dbReference type="InterPro" id="IPR020095">
    <property type="entry name" value="PsdUridine_synth_TruA_C"/>
</dbReference>
<dbReference type="InterPro" id="IPR020094">
    <property type="entry name" value="TruA/RsuA/RluB/E/F_N"/>
</dbReference>
<dbReference type="NCBIfam" id="TIGR00071">
    <property type="entry name" value="hisT_truA"/>
    <property type="match status" value="1"/>
</dbReference>
<dbReference type="PANTHER" id="PTHR11142">
    <property type="entry name" value="PSEUDOURIDYLATE SYNTHASE"/>
    <property type="match status" value="1"/>
</dbReference>
<dbReference type="PANTHER" id="PTHR11142:SF0">
    <property type="entry name" value="TRNA PSEUDOURIDINE SYNTHASE-LIKE 1"/>
    <property type="match status" value="1"/>
</dbReference>
<dbReference type="Pfam" id="PF01416">
    <property type="entry name" value="PseudoU_synth_1"/>
    <property type="match status" value="2"/>
</dbReference>
<dbReference type="PIRSF" id="PIRSF001430">
    <property type="entry name" value="tRNA_psdUrid_synth"/>
    <property type="match status" value="1"/>
</dbReference>
<dbReference type="SUPFAM" id="SSF55120">
    <property type="entry name" value="Pseudouridine synthase"/>
    <property type="match status" value="1"/>
</dbReference>
<keyword id="KW-0413">Isomerase</keyword>
<keyword id="KW-0819">tRNA processing</keyword>
<evidence type="ECO:0000255" key="1">
    <source>
        <dbReference type="HAMAP-Rule" id="MF_00171"/>
    </source>
</evidence>
<sequence length="250" mass="27914">MPRYKLVIEYDGAPFRGWQRQADDPTVQAAIETAVTRFSGETARLTCAGRTDAGVHAIHQVAHLDLAKDWRTDTVRDALNARLRPQPVAILSAEVVPQEFDARHSAIRRHYRYRILNRRSPAALTRAHVWQVPWPLDAELMHRAAQRLLGHHDFSAFRAAECQAKSPMRTLEQLDVTRVRMGLFEEIVIATSARSFLHHQVRAMAGTLMLAGCKRLSADDVAEILATGAKHRCGPLAPACGLTFVGVDYP</sequence>
<reference key="1">
    <citation type="submission" date="2007-12" db="EMBL/GenBank/DDBJ databases">
        <title>Complete sequence of Methylobacterium extorquens PA1.</title>
        <authorList>
            <consortium name="US DOE Joint Genome Institute"/>
            <person name="Copeland A."/>
            <person name="Lucas S."/>
            <person name="Lapidus A."/>
            <person name="Barry K."/>
            <person name="Glavina del Rio T."/>
            <person name="Dalin E."/>
            <person name="Tice H."/>
            <person name="Pitluck S."/>
            <person name="Saunders E."/>
            <person name="Brettin T."/>
            <person name="Bruce D."/>
            <person name="Detter J.C."/>
            <person name="Han C."/>
            <person name="Schmutz J."/>
            <person name="Larimer F."/>
            <person name="Land M."/>
            <person name="Hauser L."/>
            <person name="Kyrpides N."/>
            <person name="Kim E."/>
            <person name="Marx C."/>
            <person name="Richardson P."/>
        </authorList>
    </citation>
    <scope>NUCLEOTIDE SEQUENCE [LARGE SCALE GENOMIC DNA]</scope>
    <source>
        <strain>PA1</strain>
    </source>
</reference>
<feature type="chain" id="PRO_1000097759" description="tRNA pseudouridine synthase A">
    <location>
        <begin position="1"/>
        <end position="250"/>
    </location>
</feature>
<feature type="active site" description="Nucleophile" evidence="1">
    <location>
        <position position="52"/>
    </location>
</feature>
<feature type="binding site" evidence="1">
    <location>
        <position position="111"/>
    </location>
    <ligand>
        <name>substrate</name>
    </ligand>
</feature>
<protein>
    <recommendedName>
        <fullName evidence="1">tRNA pseudouridine synthase A</fullName>
        <ecNumber evidence="1">5.4.99.12</ecNumber>
    </recommendedName>
    <alternativeName>
        <fullName evidence="1">tRNA pseudouridine(38-40) synthase</fullName>
    </alternativeName>
    <alternativeName>
        <fullName evidence="1">tRNA pseudouridylate synthase I</fullName>
    </alternativeName>
    <alternativeName>
        <fullName evidence="1">tRNA-uridine isomerase I</fullName>
    </alternativeName>
</protein>